<comment type="function">
    <text evidence="1">Specifically methylates the pseudouridine at position 1915 (m3Psi1915) in 23S rRNA.</text>
</comment>
<comment type="catalytic activity">
    <reaction evidence="1">
        <text>pseudouridine(1915) in 23S rRNA + S-adenosyl-L-methionine = N(3)-methylpseudouridine(1915) in 23S rRNA + S-adenosyl-L-homocysteine + H(+)</text>
        <dbReference type="Rhea" id="RHEA:42752"/>
        <dbReference type="Rhea" id="RHEA-COMP:10221"/>
        <dbReference type="Rhea" id="RHEA-COMP:10222"/>
        <dbReference type="ChEBI" id="CHEBI:15378"/>
        <dbReference type="ChEBI" id="CHEBI:57856"/>
        <dbReference type="ChEBI" id="CHEBI:59789"/>
        <dbReference type="ChEBI" id="CHEBI:65314"/>
        <dbReference type="ChEBI" id="CHEBI:74486"/>
        <dbReference type="EC" id="2.1.1.177"/>
    </reaction>
</comment>
<comment type="subunit">
    <text evidence="1">Homodimer.</text>
</comment>
<comment type="subcellular location">
    <subcellularLocation>
        <location evidence="1">Cytoplasm</location>
    </subcellularLocation>
</comment>
<comment type="similarity">
    <text evidence="1">Belongs to the RNA methyltransferase RlmH family.</text>
</comment>
<reference key="1">
    <citation type="submission" date="2007-11" db="EMBL/GenBank/DDBJ databases">
        <title>Complete genome sequence of Clostridium phytofermentans ISDg.</title>
        <authorList>
            <person name="Leschine S.B."/>
            <person name="Warnick T.A."/>
            <person name="Blanchard J.L."/>
            <person name="Schnell D.J."/>
            <person name="Petit E.L."/>
            <person name="LaTouf W.G."/>
            <person name="Copeland A."/>
            <person name="Lucas S."/>
            <person name="Lapidus A."/>
            <person name="Barry K."/>
            <person name="Glavina del Rio T."/>
            <person name="Dalin E."/>
            <person name="Tice H."/>
            <person name="Pitluck S."/>
            <person name="Kiss H."/>
            <person name="Brettin T."/>
            <person name="Bruce D."/>
            <person name="Detter J.C."/>
            <person name="Han C."/>
            <person name="Kuske C."/>
            <person name="Schmutz J."/>
            <person name="Larimer F."/>
            <person name="Land M."/>
            <person name="Hauser L."/>
            <person name="Kyrpides N."/>
            <person name="Kim E.A."/>
            <person name="Richardson P."/>
        </authorList>
    </citation>
    <scope>NUCLEOTIDE SEQUENCE [LARGE SCALE GENOMIC DNA]</scope>
    <source>
        <strain>ATCC 700394 / DSM 18823 / ISDg</strain>
    </source>
</reference>
<sequence length="159" mass="18044">MKITVVCVGKIKEKYLTMAIEEYSKRLSRYCKLEIIELADEKTPDNASPAEELQIKKKEGERILKNIKDNAYVIALAIEGKMLSSEELADKMQLLGVNGESHLAFVIGGSLGLDSEVLDRADFKLSFSKMTFPHQVMRTILLEQVYRGFRIMSGEPYHK</sequence>
<gene>
    <name evidence="1" type="primary">rlmH</name>
    <name type="ordered locus">Cphy_0910</name>
</gene>
<evidence type="ECO:0000255" key="1">
    <source>
        <dbReference type="HAMAP-Rule" id="MF_00658"/>
    </source>
</evidence>
<protein>
    <recommendedName>
        <fullName evidence="1">Ribosomal RNA large subunit methyltransferase H</fullName>
        <ecNumber evidence="1">2.1.1.177</ecNumber>
    </recommendedName>
    <alternativeName>
        <fullName evidence="1">23S rRNA (pseudouridine1915-N3)-methyltransferase</fullName>
    </alternativeName>
    <alternativeName>
        <fullName evidence="1">23S rRNA m3Psi1915 methyltransferase</fullName>
    </alternativeName>
    <alternativeName>
        <fullName evidence="1">rRNA (pseudouridine-N3-)-methyltransferase RlmH</fullName>
    </alternativeName>
</protein>
<proteinExistence type="inferred from homology"/>
<dbReference type="EC" id="2.1.1.177" evidence="1"/>
<dbReference type="EMBL" id="CP000885">
    <property type="protein sequence ID" value="ABX41295.1"/>
    <property type="molecule type" value="Genomic_DNA"/>
</dbReference>
<dbReference type="RefSeq" id="WP_012198941.1">
    <property type="nucleotide sequence ID" value="NC_010001.1"/>
</dbReference>
<dbReference type="SMR" id="A9KLG6"/>
<dbReference type="STRING" id="357809.Cphy_0910"/>
<dbReference type="KEGG" id="cpy:Cphy_0910"/>
<dbReference type="eggNOG" id="COG1576">
    <property type="taxonomic scope" value="Bacteria"/>
</dbReference>
<dbReference type="HOGENOM" id="CLU_100552_0_0_9"/>
<dbReference type="OrthoDB" id="9806643at2"/>
<dbReference type="Proteomes" id="UP000000370">
    <property type="component" value="Chromosome"/>
</dbReference>
<dbReference type="GO" id="GO:0005737">
    <property type="term" value="C:cytoplasm"/>
    <property type="evidence" value="ECO:0007669"/>
    <property type="project" value="UniProtKB-SubCell"/>
</dbReference>
<dbReference type="GO" id="GO:0070038">
    <property type="term" value="F:rRNA (pseudouridine-N3-)-methyltransferase activity"/>
    <property type="evidence" value="ECO:0007669"/>
    <property type="project" value="UniProtKB-UniRule"/>
</dbReference>
<dbReference type="CDD" id="cd18081">
    <property type="entry name" value="RlmH-like"/>
    <property type="match status" value="1"/>
</dbReference>
<dbReference type="Gene3D" id="3.40.1280.10">
    <property type="match status" value="1"/>
</dbReference>
<dbReference type="HAMAP" id="MF_00658">
    <property type="entry name" value="23SrRNA_methyltr_H"/>
    <property type="match status" value="1"/>
</dbReference>
<dbReference type="InterPro" id="IPR029028">
    <property type="entry name" value="Alpha/beta_knot_MTases"/>
</dbReference>
<dbReference type="InterPro" id="IPR003742">
    <property type="entry name" value="RlmH-like"/>
</dbReference>
<dbReference type="InterPro" id="IPR029026">
    <property type="entry name" value="tRNA_m1G_MTases_N"/>
</dbReference>
<dbReference type="NCBIfam" id="NF000985">
    <property type="entry name" value="PRK00103.1-3"/>
    <property type="match status" value="1"/>
</dbReference>
<dbReference type="NCBIfam" id="TIGR00246">
    <property type="entry name" value="tRNA_RlmH_YbeA"/>
    <property type="match status" value="1"/>
</dbReference>
<dbReference type="PANTHER" id="PTHR33603">
    <property type="entry name" value="METHYLTRANSFERASE"/>
    <property type="match status" value="1"/>
</dbReference>
<dbReference type="PANTHER" id="PTHR33603:SF1">
    <property type="entry name" value="RIBOSOMAL RNA LARGE SUBUNIT METHYLTRANSFERASE H"/>
    <property type="match status" value="1"/>
</dbReference>
<dbReference type="Pfam" id="PF02590">
    <property type="entry name" value="SPOUT_MTase"/>
    <property type="match status" value="1"/>
</dbReference>
<dbReference type="PIRSF" id="PIRSF004505">
    <property type="entry name" value="MT_bac"/>
    <property type="match status" value="1"/>
</dbReference>
<dbReference type="SUPFAM" id="SSF75217">
    <property type="entry name" value="alpha/beta knot"/>
    <property type="match status" value="1"/>
</dbReference>
<keyword id="KW-0963">Cytoplasm</keyword>
<keyword id="KW-0489">Methyltransferase</keyword>
<keyword id="KW-1185">Reference proteome</keyword>
<keyword id="KW-0698">rRNA processing</keyword>
<keyword id="KW-0949">S-adenosyl-L-methionine</keyword>
<keyword id="KW-0808">Transferase</keyword>
<name>RLMH_LACP7</name>
<organism>
    <name type="scientific">Lachnoclostridium phytofermentans (strain ATCC 700394 / DSM 18823 / ISDg)</name>
    <name type="common">Clostridium phytofermentans</name>
    <dbReference type="NCBI Taxonomy" id="357809"/>
    <lineage>
        <taxon>Bacteria</taxon>
        <taxon>Bacillati</taxon>
        <taxon>Bacillota</taxon>
        <taxon>Clostridia</taxon>
        <taxon>Lachnospirales</taxon>
        <taxon>Lachnospiraceae</taxon>
    </lineage>
</organism>
<feature type="chain" id="PRO_1000082799" description="Ribosomal RNA large subunit methyltransferase H">
    <location>
        <begin position="1"/>
        <end position="159"/>
    </location>
</feature>
<feature type="binding site" evidence="1">
    <location>
        <position position="76"/>
    </location>
    <ligand>
        <name>S-adenosyl-L-methionine</name>
        <dbReference type="ChEBI" id="CHEBI:59789"/>
    </ligand>
</feature>
<feature type="binding site" evidence="1">
    <location>
        <position position="108"/>
    </location>
    <ligand>
        <name>S-adenosyl-L-methionine</name>
        <dbReference type="ChEBI" id="CHEBI:59789"/>
    </ligand>
</feature>
<feature type="binding site" evidence="1">
    <location>
        <begin position="127"/>
        <end position="132"/>
    </location>
    <ligand>
        <name>S-adenosyl-L-methionine</name>
        <dbReference type="ChEBI" id="CHEBI:59789"/>
    </ligand>
</feature>
<accession>A9KLG6</accession>